<feature type="chain" id="PRO_0000206099" description="Probable proton-coupled zinc antiporter SLC30A4">
    <location>
        <begin position="1"/>
        <end position="429"/>
    </location>
</feature>
<feature type="topological domain" description="Cytoplasmic" evidence="9">
    <location>
        <begin position="1"/>
        <end position="113"/>
    </location>
</feature>
<feature type="transmembrane region" description="Helical" evidence="4">
    <location>
        <begin position="114"/>
        <end position="134"/>
    </location>
</feature>
<feature type="topological domain" description="Lumenal" evidence="9">
    <location>
        <begin position="135"/>
        <end position="143"/>
    </location>
</feature>
<feature type="transmembrane region" description="Helical" evidence="4">
    <location>
        <begin position="144"/>
        <end position="164"/>
    </location>
</feature>
<feature type="topological domain" description="Cytoplasmic" evidence="9">
    <location>
        <begin position="165"/>
        <end position="178"/>
    </location>
</feature>
<feature type="transmembrane region" description="Helical" evidence="4">
    <location>
        <begin position="179"/>
        <end position="199"/>
    </location>
</feature>
<feature type="topological domain" description="Lumenal" evidence="9">
    <location>
        <begin position="200"/>
        <end position="216"/>
    </location>
</feature>
<feature type="transmembrane region" description="Helical" evidence="4">
    <location>
        <begin position="217"/>
        <end position="237"/>
    </location>
</feature>
<feature type="topological domain" description="Cytoplasmic" evidence="9">
    <location>
        <begin position="238"/>
        <end position="274"/>
    </location>
</feature>
<feature type="transmembrane region" description="Helical" evidence="4">
    <location>
        <begin position="275"/>
        <end position="295"/>
    </location>
</feature>
<feature type="topological domain" description="Lumenal" evidence="9">
    <location>
        <begin position="296"/>
        <end position="310"/>
    </location>
</feature>
<feature type="transmembrane region" description="Helical" evidence="4">
    <location>
        <begin position="311"/>
        <end position="331"/>
    </location>
</feature>
<feature type="topological domain" description="Cytoplasmic" evidence="9">
    <location>
        <begin position="332"/>
        <end position="429"/>
    </location>
</feature>
<feature type="region of interest" description="Zinc binding" evidence="2">
    <location>
        <begin position="240"/>
        <end position="264"/>
    </location>
</feature>
<feature type="binding site" evidence="3">
    <location>
        <position position="146"/>
    </location>
    <ligand>
        <name>Zn(2+)</name>
        <dbReference type="ChEBI" id="CHEBI:29105"/>
        <note>transported zinc</note>
    </ligand>
</feature>
<feature type="binding site" evidence="3">
    <location>
        <position position="150"/>
    </location>
    <ligand>
        <name>Zn(2+)</name>
        <dbReference type="ChEBI" id="CHEBI:29105"/>
        <note>transported zinc</note>
    </ligand>
</feature>
<feature type="binding site" evidence="3">
    <location>
        <position position="277"/>
    </location>
    <ligand>
        <name>Zn(2+)</name>
        <dbReference type="ChEBI" id="CHEBI:29105"/>
        <note>transported zinc</note>
    </ligand>
</feature>
<feature type="binding site" evidence="3">
    <location>
        <position position="281"/>
    </location>
    <ligand>
        <name>Zn(2+)</name>
        <dbReference type="ChEBI" id="CHEBI:29105"/>
        <note>transported zinc</note>
    </ligand>
</feature>
<feature type="mutagenesis site" description="Decreased homodimerization." evidence="6">
    <original>Y</original>
    <variation>F</variation>
    <location>
        <position position="355"/>
    </location>
</feature>
<feature type="mutagenesis site" description="Decreased homodimerization." evidence="6">
    <original>Y</original>
    <variation>F</variation>
    <location>
        <position position="404"/>
    </location>
</feature>
<feature type="mutagenesis site" description="Decreased homodimerization." evidence="6">
    <original>Y</original>
    <variation>F</variation>
    <location>
        <position position="413"/>
    </location>
</feature>
<feature type="sequence conflict" description="In Ref. 1; AAB82561." evidence="9" ref="1">
    <original>D</original>
    <variation>E</variation>
    <location>
        <position position="30"/>
    </location>
</feature>
<accession>O14863</accession>
<accession>Q8TC39</accession>
<evidence type="ECO:0000250" key="1">
    <source>
        <dbReference type="UniProtKB" id="O35149"/>
    </source>
</evidence>
<evidence type="ECO:0000250" key="2">
    <source>
        <dbReference type="UniProtKB" id="O55174"/>
    </source>
</evidence>
<evidence type="ECO:0000250" key="3">
    <source>
        <dbReference type="UniProtKB" id="Q8IWU4"/>
    </source>
</evidence>
<evidence type="ECO:0000255" key="4"/>
<evidence type="ECO:0000269" key="5">
    <source>
    </source>
</evidence>
<evidence type="ECO:0000269" key="6">
    <source>
    </source>
</evidence>
<evidence type="ECO:0000269" key="7">
    <source>
    </source>
</evidence>
<evidence type="ECO:0000303" key="8">
    <source>
    </source>
</evidence>
<evidence type="ECO:0000305" key="9"/>
<evidence type="ECO:0000305" key="10">
    <source>
    </source>
</evidence>
<evidence type="ECO:0000312" key="11">
    <source>
        <dbReference type="HGNC" id="HGNC:11015"/>
    </source>
</evidence>
<sequence length="429" mass="47483">MAGSGAWKRLKSMLRKDDAPLFLNDTSAFDFSDEAGDEGLSRFNKLRVVVADDGSEAPERPVNGAHPTLQADDDSLLDQDLPLTNSQLSLKVDSCDNCSKQREILKQRKVKARLTIAAVLYLLFMIGELVGGYIANSLAIMTDALHMLTDLSAIILTLLALWLSSKSPTKRFTFGFHRLEVLSAMISVLLVYILMGFLLYEAVQRTIHMNYEINGDIMLITAAVGVAVNVIMGFLLNQSGHRHSHSHSLPSNSPTRGSGCERNHGQDSLAVRAAFVHALGDLVQSVGVLIAAYIIRFKPEYKIADPICTYVFSLLVAFTTFRIIWDTVVIILEGVPSHLNVDYIKEALMKIEDVYSVEDLNIWSLTSGKSTAIVHIQLIPGSSSKWEEVQSKANHLLLNTFGMYRCTIQLQSYRQEVDRTCANCQSSSP</sequence>
<dbReference type="EMBL" id="AF025409">
    <property type="protein sequence ID" value="AAB82561.1"/>
    <property type="molecule type" value="mRNA"/>
</dbReference>
<dbReference type="EMBL" id="AK290874">
    <property type="protein sequence ID" value="BAF83563.1"/>
    <property type="molecule type" value="mRNA"/>
</dbReference>
<dbReference type="EMBL" id="CH471082">
    <property type="protein sequence ID" value="EAW77316.1"/>
    <property type="molecule type" value="Genomic_DNA"/>
</dbReference>
<dbReference type="EMBL" id="BC026089">
    <property type="protein sequence ID" value="AAH26089.1"/>
    <property type="molecule type" value="mRNA"/>
</dbReference>
<dbReference type="CCDS" id="CCDS10125.1"/>
<dbReference type="RefSeq" id="NP_037441.2">
    <property type="nucleotide sequence ID" value="NM_013309.5"/>
</dbReference>
<dbReference type="RefSeq" id="XP_011520299.1">
    <property type="nucleotide sequence ID" value="XM_011521997.2"/>
</dbReference>
<dbReference type="RefSeq" id="XP_016878049.1">
    <property type="nucleotide sequence ID" value="XM_017022560.3"/>
</dbReference>
<dbReference type="RefSeq" id="XP_054234740.1">
    <property type="nucleotide sequence ID" value="XM_054378765.1"/>
</dbReference>
<dbReference type="SMR" id="O14863"/>
<dbReference type="BioGRID" id="113563">
    <property type="interactions" value="60"/>
</dbReference>
<dbReference type="ComplexPortal" id="CPX-8429">
    <property type="entry name" value="ZNT4 proton-coupled zinc antiporter homodimer"/>
</dbReference>
<dbReference type="ComplexPortal" id="CPX-8441">
    <property type="entry name" value="ZNT1-ZNT4 proton-coupled zinc antiporter complex"/>
</dbReference>
<dbReference type="ComplexPortal" id="CPX-8442">
    <property type="entry name" value="ZNT2-ZNT4 proton-coupled zinc antiporter complex"/>
</dbReference>
<dbReference type="ComplexPortal" id="CPX-8443">
    <property type="entry name" value="ZNT3-ZNT4 proton-coupled zinc antiporter complex"/>
</dbReference>
<dbReference type="ComplexPortal" id="CPX-8465">
    <property type="entry name" value="ZNT4-ZNT10 proton-coupled zinc antiporter complex"/>
</dbReference>
<dbReference type="FunCoup" id="O14863">
    <property type="interactions" value="174"/>
</dbReference>
<dbReference type="IntAct" id="O14863">
    <property type="interactions" value="39"/>
</dbReference>
<dbReference type="STRING" id="9606.ENSP00000261867"/>
<dbReference type="DrugBank" id="DB14533">
    <property type="generic name" value="Zinc chloride"/>
</dbReference>
<dbReference type="DrugBank" id="DB14548">
    <property type="generic name" value="Zinc sulfate, unspecified form"/>
</dbReference>
<dbReference type="TCDB" id="2.A.4.3.7">
    <property type="family name" value="the cation diffusion facilitator (cdf) family"/>
</dbReference>
<dbReference type="iPTMnet" id="O14863"/>
<dbReference type="PhosphoSitePlus" id="O14863"/>
<dbReference type="SwissPalm" id="O14863"/>
<dbReference type="BioMuta" id="SLC30A4"/>
<dbReference type="jPOST" id="O14863"/>
<dbReference type="MassIVE" id="O14863"/>
<dbReference type="PaxDb" id="9606-ENSP00000261867"/>
<dbReference type="PeptideAtlas" id="O14863"/>
<dbReference type="ProteomicsDB" id="48276"/>
<dbReference type="Antibodypedia" id="11839">
    <property type="antibodies" value="66 antibodies from 21 providers"/>
</dbReference>
<dbReference type="DNASU" id="7782"/>
<dbReference type="Ensembl" id="ENST00000261867.5">
    <property type="protein sequence ID" value="ENSP00000261867.3"/>
    <property type="gene ID" value="ENSG00000104154.7"/>
</dbReference>
<dbReference type="GeneID" id="7782"/>
<dbReference type="KEGG" id="hsa:7782"/>
<dbReference type="MANE-Select" id="ENST00000261867.5">
    <property type="protein sequence ID" value="ENSP00000261867.3"/>
    <property type="RefSeq nucleotide sequence ID" value="NM_013309.6"/>
    <property type="RefSeq protein sequence ID" value="NP_037441.2"/>
</dbReference>
<dbReference type="UCSC" id="uc001zvj.5">
    <property type="organism name" value="human"/>
</dbReference>
<dbReference type="AGR" id="HGNC:11015"/>
<dbReference type="CTD" id="7782"/>
<dbReference type="DisGeNET" id="7782"/>
<dbReference type="GeneCards" id="SLC30A4"/>
<dbReference type="HGNC" id="HGNC:11015">
    <property type="gene designation" value="SLC30A4"/>
</dbReference>
<dbReference type="HPA" id="ENSG00000104154">
    <property type="expression patterns" value="Tissue enriched (prostate)"/>
</dbReference>
<dbReference type="MIM" id="602095">
    <property type="type" value="gene"/>
</dbReference>
<dbReference type="neXtProt" id="NX_O14863"/>
<dbReference type="OpenTargets" id="ENSG00000104154"/>
<dbReference type="PharmGKB" id="PA35885"/>
<dbReference type="VEuPathDB" id="HostDB:ENSG00000104154"/>
<dbReference type="eggNOG" id="KOG1482">
    <property type="taxonomic scope" value="Eukaryota"/>
</dbReference>
<dbReference type="GeneTree" id="ENSGT00940000157545"/>
<dbReference type="HOGENOM" id="CLU_013430_0_1_1"/>
<dbReference type="InParanoid" id="O14863"/>
<dbReference type="OMA" id="PCDNCNK"/>
<dbReference type="OrthoDB" id="9944568at2759"/>
<dbReference type="PAN-GO" id="O14863">
    <property type="GO annotations" value="5 GO annotations based on evolutionary models"/>
</dbReference>
<dbReference type="PhylomeDB" id="O14863"/>
<dbReference type="TreeFam" id="TF313382"/>
<dbReference type="PathwayCommons" id="O14863"/>
<dbReference type="SignaLink" id="O14863"/>
<dbReference type="BioGRID-ORCS" id="7782">
    <property type="hits" value="8 hits in 1150 CRISPR screens"/>
</dbReference>
<dbReference type="ChiTaRS" id="SLC30A4">
    <property type="organism name" value="human"/>
</dbReference>
<dbReference type="GeneWiki" id="SLC30A4"/>
<dbReference type="GenomeRNAi" id="7782"/>
<dbReference type="Pharos" id="O14863">
    <property type="development level" value="Tbio"/>
</dbReference>
<dbReference type="PRO" id="PR:O14863"/>
<dbReference type="Proteomes" id="UP000005640">
    <property type="component" value="Chromosome 15"/>
</dbReference>
<dbReference type="RNAct" id="O14863">
    <property type="molecule type" value="protein"/>
</dbReference>
<dbReference type="Bgee" id="ENSG00000104154">
    <property type="expression patterns" value="Expressed in jejunal mucosa and 184 other cell types or tissues"/>
</dbReference>
<dbReference type="GO" id="GO:0005737">
    <property type="term" value="C:cytoplasm"/>
    <property type="evidence" value="ECO:0000314"/>
    <property type="project" value="BHF-UCL"/>
</dbReference>
<dbReference type="GO" id="GO:0010008">
    <property type="term" value="C:endosome membrane"/>
    <property type="evidence" value="ECO:0000250"/>
    <property type="project" value="UniProtKB"/>
</dbReference>
<dbReference type="GO" id="GO:0005770">
    <property type="term" value="C:late endosome"/>
    <property type="evidence" value="ECO:0000314"/>
    <property type="project" value="BHF-UCL"/>
</dbReference>
<dbReference type="GO" id="GO:0031902">
    <property type="term" value="C:late endosome membrane"/>
    <property type="evidence" value="ECO:0007669"/>
    <property type="project" value="UniProtKB-SubCell"/>
</dbReference>
<dbReference type="GO" id="GO:0005765">
    <property type="term" value="C:lysosomal membrane"/>
    <property type="evidence" value="ECO:0007669"/>
    <property type="project" value="UniProtKB-SubCell"/>
</dbReference>
<dbReference type="GO" id="GO:0005886">
    <property type="term" value="C:plasma membrane"/>
    <property type="evidence" value="ECO:0000318"/>
    <property type="project" value="GO_Central"/>
</dbReference>
<dbReference type="GO" id="GO:0015297">
    <property type="term" value="F:antiporter activity"/>
    <property type="evidence" value="ECO:0007669"/>
    <property type="project" value="UniProtKB-KW"/>
</dbReference>
<dbReference type="GO" id="GO:0046872">
    <property type="term" value="F:metal ion binding"/>
    <property type="evidence" value="ECO:0007669"/>
    <property type="project" value="UniProtKB-KW"/>
</dbReference>
<dbReference type="GO" id="GO:0005385">
    <property type="term" value="F:zinc ion transmembrane transporter activity"/>
    <property type="evidence" value="ECO:0000314"/>
    <property type="project" value="UniProtKB"/>
</dbReference>
<dbReference type="GO" id="GO:0009636">
    <property type="term" value="P:response to toxic substance"/>
    <property type="evidence" value="ECO:0000314"/>
    <property type="project" value="UniProtKB"/>
</dbReference>
<dbReference type="GO" id="GO:0010043">
    <property type="term" value="P:response to zinc ion"/>
    <property type="evidence" value="ECO:0000318"/>
    <property type="project" value="GO_Central"/>
</dbReference>
<dbReference type="GO" id="GO:0140882">
    <property type="term" value="P:zinc export across plasma membrane"/>
    <property type="evidence" value="ECO:0007669"/>
    <property type="project" value="Ensembl"/>
</dbReference>
<dbReference type="GO" id="GO:0140916">
    <property type="term" value="P:zinc ion import into lysosome"/>
    <property type="evidence" value="ECO:0000314"/>
    <property type="project" value="BHF-UCL"/>
</dbReference>
<dbReference type="GO" id="GO:0071577">
    <property type="term" value="P:zinc ion transmembrane transport"/>
    <property type="evidence" value="ECO:0000314"/>
    <property type="project" value="UniProtKB"/>
</dbReference>
<dbReference type="FunFam" id="1.20.1510.10:FF:000017">
    <property type="entry name" value="zinc transporter 4 isoform X1"/>
    <property type="match status" value="1"/>
</dbReference>
<dbReference type="Gene3D" id="1.20.1510.10">
    <property type="entry name" value="Cation efflux protein transmembrane domain"/>
    <property type="match status" value="1"/>
</dbReference>
<dbReference type="InterPro" id="IPR002524">
    <property type="entry name" value="Cation_efflux"/>
</dbReference>
<dbReference type="InterPro" id="IPR036837">
    <property type="entry name" value="Cation_efflux_CTD_sf"/>
</dbReference>
<dbReference type="InterPro" id="IPR027469">
    <property type="entry name" value="Cation_efflux_TMD_sf"/>
</dbReference>
<dbReference type="InterPro" id="IPR050681">
    <property type="entry name" value="CDF/SLC30A"/>
</dbReference>
<dbReference type="NCBIfam" id="TIGR01297">
    <property type="entry name" value="CDF"/>
    <property type="match status" value="1"/>
</dbReference>
<dbReference type="PANTHER" id="PTHR11562">
    <property type="entry name" value="CATION EFFLUX PROTEIN/ ZINC TRANSPORTER"/>
    <property type="match status" value="1"/>
</dbReference>
<dbReference type="PANTHER" id="PTHR11562:SF27">
    <property type="entry name" value="PROTON-COUPLED ZINC ANTIPORTER SLC30A4-RELATED"/>
    <property type="match status" value="1"/>
</dbReference>
<dbReference type="Pfam" id="PF01545">
    <property type="entry name" value="Cation_efflux"/>
    <property type="match status" value="1"/>
</dbReference>
<dbReference type="SUPFAM" id="SSF160240">
    <property type="entry name" value="Cation efflux protein cytoplasmic domain-like"/>
    <property type="match status" value="1"/>
</dbReference>
<dbReference type="SUPFAM" id="SSF161111">
    <property type="entry name" value="Cation efflux protein transmembrane domain-like"/>
    <property type="match status" value="1"/>
</dbReference>
<reference key="1">
    <citation type="journal article" date="1997" name="Nat. Genet.">
        <title>A novel gene involved in zinc transport is deficient in the lethal milk mouse.</title>
        <authorList>
            <person name="Huang L."/>
            <person name="Gitschier J."/>
        </authorList>
    </citation>
    <scope>NUCLEOTIDE SEQUENCE [MRNA]</scope>
    <source>
        <tissue>Fetal brain</tissue>
    </source>
</reference>
<reference key="2">
    <citation type="journal article" date="2004" name="Nat. Genet.">
        <title>Complete sequencing and characterization of 21,243 full-length human cDNAs.</title>
        <authorList>
            <person name="Ota T."/>
            <person name="Suzuki Y."/>
            <person name="Nishikawa T."/>
            <person name="Otsuki T."/>
            <person name="Sugiyama T."/>
            <person name="Irie R."/>
            <person name="Wakamatsu A."/>
            <person name="Hayashi K."/>
            <person name="Sato H."/>
            <person name="Nagai K."/>
            <person name="Kimura K."/>
            <person name="Makita H."/>
            <person name="Sekine M."/>
            <person name="Obayashi M."/>
            <person name="Nishi T."/>
            <person name="Shibahara T."/>
            <person name="Tanaka T."/>
            <person name="Ishii S."/>
            <person name="Yamamoto J."/>
            <person name="Saito K."/>
            <person name="Kawai Y."/>
            <person name="Isono Y."/>
            <person name="Nakamura Y."/>
            <person name="Nagahari K."/>
            <person name="Murakami K."/>
            <person name="Yasuda T."/>
            <person name="Iwayanagi T."/>
            <person name="Wagatsuma M."/>
            <person name="Shiratori A."/>
            <person name="Sudo H."/>
            <person name="Hosoiri T."/>
            <person name="Kaku Y."/>
            <person name="Kodaira H."/>
            <person name="Kondo H."/>
            <person name="Sugawara M."/>
            <person name="Takahashi M."/>
            <person name="Kanda K."/>
            <person name="Yokoi T."/>
            <person name="Furuya T."/>
            <person name="Kikkawa E."/>
            <person name="Omura Y."/>
            <person name="Abe K."/>
            <person name="Kamihara K."/>
            <person name="Katsuta N."/>
            <person name="Sato K."/>
            <person name="Tanikawa M."/>
            <person name="Yamazaki M."/>
            <person name="Ninomiya K."/>
            <person name="Ishibashi T."/>
            <person name="Yamashita H."/>
            <person name="Murakawa K."/>
            <person name="Fujimori K."/>
            <person name="Tanai H."/>
            <person name="Kimata M."/>
            <person name="Watanabe M."/>
            <person name="Hiraoka S."/>
            <person name="Chiba Y."/>
            <person name="Ishida S."/>
            <person name="Ono Y."/>
            <person name="Takiguchi S."/>
            <person name="Watanabe S."/>
            <person name="Yosida M."/>
            <person name="Hotuta T."/>
            <person name="Kusano J."/>
            <person name="Kanehori K."/>
            <person name="Takahashi-Fujii A."/>
            <person name="Hara H."/>
            <person name="Tanase T.-O."/>
            <person name="Nomura Y."/>
            <person name="Togiya S."/>
            <person name="Komai F."/>
            <person name="Hara R."/>
            <person name="Takeuchi K."/>
            <person name="Arita M."/>
            <person name="Imose N."/>
            <person name="Musashino K."/>
            <person name="Yuuki H."/>
            <person name="Oshima A."/>
            <person name="Sasaki N."/>
            <person name="Aotsuka S."/>
            <person name="Yoshikawa Y."/>
            <person name="Matsunawa H."/>
            <person name="Ichihara T."/>
            <person name="Shiohata N."/>
            <person name="Sano S."/>
            <person name="Moriya S."/>
            <person name="Momiyama H."/>
            <person name="Satoh N."/>
            <person name="Takami S."/>
            <person name="Terashima Y."/>
            <person name="Suzuki O."/>
            <person name="Nakagawa S."/>
            <person name="Senoh A."/>
            <person name="Mizoguchi H."/>
            <person name="Goto Y."/>
            <person name="Shimizu F."/>
            <person name="Wakebe H."/>
            <person name="Hishigaki H."/>
            <person name="Watanabe T."/>
            <person name="Sugiyama A."/>
            <person name="Takemoto M."/>
            <person name="Kawakami B."/>
            <person name="Yamazaki M."/>
            <person name="Watanabe K."/>
            <person name="Kumagai A."/>
            <person name="Itakura S."/>
            <person name="Fukuzumi Y."/>
            <person name="Fujimori Y."/>
            <person name="Komiyama M."/>
            <person name="Tashiro H."/>
            <person name="Tanigami A."/>
            <person name="Fujiwara T."/>
            <person name="Ono T."/>
            <person name="Yamada K."/>
            <person name="Fujii Y."/>
            <person name="Ozaki K."/>
            <person name="Hirao M."/>
            <person name="Ohmori Y."/>
            <person name="Kawabata A."/>
            <person name="Hikiji T."/>
            <person name="Kobatake N."/>
            <person name="Inagaki H."/>
            <person name="Ikema Y."/>
            <person name="Okamoto S."/>
            <person name="Okitani R."/>
            <person name="Kawakami T."/>
            <person name="Noguchi S."/>
            <person name="Itoh T."/>
            <person name="Shigeta K."/>
            <person name="Senba T."/>
            <person name="Matsumura K."/>
            <person name="Nakajima Y."/>
            <person name="Mizuno T."/>
            <person name="Morinaga M."/>
            <person name="Sasaki M."/>
            <person name="Togashi T."/>
            <person name="Oyama M."/>
            <person name="Hata H."/>
            <person name="Watanabe M."/>
            <person name="Komatsu T."/>
            <person name="Mizushima-Sugano J."/>
            <person name="Satoh T."/>
            <person name="Shirai Y."/>
            <person name="Takahashi Y."/>
            <person name="Nakagawa K."/>
            <person name="Okumura K."/>
            <person name="Nagase T."/>
            <person name="Nomura N."/>
            <person name="Kikuchi H."/>
            <person name="Masuho Y."/>
            <person name="Yamashita R."/>
            <person name="Nakai K."/>
            <person name="Yada T."/>
            <person name="Nakamura Y."/>
            <person name="Ohara O."/>
            <person name="Isogai T."/>
            <person name="Sugano S."/>
        </authorList>
    </citation>
    <scope>NUCLEOTIDE SEQUENCE [LARGE SCALE MRNA]</scope>
    <source>
        <tissue>Mesangial cell</tissue>
    </source>
</reference>
<reference key="3">
    <citation type="submission" date="2005-07" db="EMBL/GenBank/DDBJ databases">
        <authorList>
            <person name="Mural R.J."/>
            <person name="Istrail S."/>
            <person name="Sutton G.G."/>
            <person name="Florea L."/>
            <person name="Halpern A.L."/>
            <person name="Mobarry C.M."/>
            <person name="Lippert R."/>
            <person name="Walenz B."/>
            <person name="Shatkay H."/>
            <person name="Dew I."/>
            <person name="Miller J.R."/>
            <person name="Flanigan M.J."/>
            <person name="Edwards N.J."/>
            <person name="Bolanos R."/>
            <person name="Fasulo D."/>
            <person name="Halldorsson B.V."/>
            <person name="Hannenhalli S."/>
            <person name="Turner R."/>
            <person name="Yooseph S."/>
            <person name="Lu F."/>
            <person name="Nusskern D.R."/>
            <person name="Shue B.C."/>
            <person name="Zheng X.H."/>
            <person name="Zhong F."/>
            <person name="Delcher A.L."/>
            <person name="Huson D.H."/>
            <person name="Kravitz S.A."/>
            <person name="Mouchard L."/>
            <person name="Reinert K."/>
            <person name="Remington K.A."/>
            <person name="Clark A.G."/>
            <person name="Waterman M.S."/>
            <person name="Eichler E.E."/>
            <person name="Adams M.D."/>
            <person name="Hunkapiller M.W."/>
            <person name="Myers E.W."/>
            <person name="Venter J.C."/>
        </authorList>
    </citation>
    <scope>NUCLEOTIDE SEQUENCE [LARGE SCALE GENOMIC DNA]</scope>
</reference>
<reference key="4">
    <citation type="journal article" date="2004" name="Genome Res.">
        <title>The status, quality, and expansion of the NIH full-length cDNA project: the Mammalian Gene Collection (MGC).</title>
        <authorList>
            <consortium name="The MGC Project Team"/>
        </authorList>
    </citation>
    <scope>NUCLEOTIDE SEQUENCE [LARGE SCALE MRNA]</scope>
    <source>
        <tissue>Testis</tissue>
    </source>
</reference>
<reference key="5">
    <citation type="journal article" date="2009" name="PLoS ONE">
        <title>SLC30A3 (ZnT3) oligomerization by dityrosine bonds regulates its subcellular localization and metal transport capacity.</title>
        <authorList>
            <person name="Salazar G."/>
            <person name="Falcon-Perez J.M."/>
            <person name="Harrison R."/>
            <person name="Faundez V."/>
        </authorList>
    </citation>
    <scope>FUNCTION</scope>
    <scope>TRANSPORTER ACTIVITY</scope>
    <scope>SUBUNIT</scope>
    <scope>DITYROSINE BOND</scope>
    <scope>MUTAGENESIS OF TYR-355; TYR-404 AND TYR-413</scope>
</reference>
<reference key="6">
    <citation type="journal article" date="2007" name="Exp. Cell Res.">
        <title>Zinc transporter 2 (SLC30A2) can suppress the vesicular zinc defect of adaptor protein 3-depleted fibroblasts by promoting zinc accumulation in lysosomes.</title>
        <authorList>
            <person name="Falcon-Perez J.M."/>
            <person name="Dell'Angelica E.C."/>
        </authorList>
    </citation>
    <scope>SUBCELLULAR LOCATION</scope>
</reference>
<reference key="7">
    <citation type="journal article" date="2022" name="Biochem. Biophys. Rep.">
        <title>Transmembrane 163 (TMEM163) protein interacts with specific mammalian SLC30 zinc efflux transporter family members.</title>
        <authorList>
            <person name="Escobar A."/>
            <person name="Styrpejko D.J."/>
            <person name="Ali S."/>
            <person name="Cuajungco M.P."/>
        </authorList>
    </citation>
    <scope>INTERACTION WITH TMEM163</scope>
</reference>
<comment type="function">
    <text evidence="1 10">Probable proton-coupled zinc ion antiporter mediating zinc import from cytoplasm potentially into the endocytic compartment (PubMed:19521526). Controls zinc deposition in milk (By similarity).</text>
</comment>
<comment type="catalytic activity">
    <reaction evidence="10">
        <text>Zn(2+)(in) + 2 H(+)(out) = Zn(2+)(out) + 2 H(+)(in)</text>
        <dbReference type="Rhea" id="RHEA:72627"/>
        <dbReference type="ChEBI" id="CHEBI:15378"/>
        <dbReference type="ChEBI" id="CHEBI:29105"/>
    </reaction>
</comment>
<comment type="subunit">
    <text evidence="6 7">Homodimer; dityrosine-linked. Homodimerization could be specific of the human protein and enhances the zinc transport efficiency. Interacts with TMEM163 (PubMed:36204728).</text>
</comment>
<comment type="interaction">
    <interactant intactId="EBI-13918058">
        <id>O14863</id>
    </interactant>
    <interactant intactId="EBI-8648738">
        <id>Q8WVV5</id>
        <label>BTN2A2</label>
    </interactant>
    <organismsDiffer>false</organismsDiffer>
    <experiments>3</experiments>
</comment>
<comment type="interaction">
    <interactant intactId="EBI-13918058">
        <id>O14863</id>
    </interactant>
    <interactant intactId="EBI-6165897">
        <id>Q9NWW5</id>
        <label>CLN6</label>
    </interactant>
    <organismsDiffer>false</organismsDiffer>
    <experiments>3</experiments>
</comment>
<comment type="interaction">
    <interactant intactId="EBI-13918058">
        <id>O14863</id>
    </interactant>
    <interactant intactId="EBI-11522780">
        <id>Q96DZ9-2</id>
        <label>CMTM5</label>
    </interactant>
    <organismsDiffer>false</organismsDiffer>
    <experiments>3</experiments>
</comment>
<comment type="interaction">
    <interactant intactId="EBI-13918058">
        <id>O14863</id>
    </interactant>
    <interactant intactId="EBI-746917">
        <id>O75084</id>
        <label>FZD7</label>
    </interactant>
    <organismsDiffer>false</organismsDiffer>
    <experiments>3</experiments>
</comment>
<comment type="interaction">
    <interactant intactId="EBI-13918058">
        <id>O14863</id>
    </interactant>
    <interactant intactId="EBI-725665">
        <id>Q9Y5U9</id>
        <label>IER3IP1</label>
    </interactant>
    <organismsDiffer>false</organismsDiffer>
    <experiments>3</experiments>
</comment>
<comment type="interaction">
    <interactant intactId="EBI-13918058">
        <id>O14863</id>
    </interactant>
    <interactant intactId="EBI-750776">
        <id>O95214</id>
        <label>LEPROTL1</label>
    </interactant>
    <organismsDiffer>false</organismsDiffer>
    <experiments>3</experiments>
</comment>
<comment type="interaction">
    <interactant intactId="EBI-13918058">
        <id>O14863</id>
    </interactant>
    <interactant intactId="EBI-6380741">
        <id>P42857</id>
        <label>NSG1</label>
    </interactant>
    <organismsDiffer>false</organismsDiffer>
    <experiments>3</experiments>
</comment>
<comment type="interaction">
    <interactant intactId="EBI-13918058">
        <id>O14863</id>
    </interactant>
    <interactant intactId="EBI-12213001">
        <id>I3L0A0</id>
        <label>PEDS1-UBE2V1</label>
    </interactant>
    <organismsDiffer>false</organismsDiffer>
    <experiments>3</experiments>
</comment>
<comment type="interaction">
    <interactant intactId="EBI-13918058">
        <id>O14863</id>
    </interactant>
    <interactant intactId="EBI-749270">
        <id>Q8N6R1</id>
        <label>SERP2</label>
    </interactant>
    <organismsDiffer>false</organismsDiffer>
    <experiments>3</experiments>
</comment>
<comment type="interaction">
    <interactant intactId="EBI-13918058">
        <id>O14863</id>
    </interactant>
    <interactant intactId="EBI-13917996">
        <id>Q6XR72</id>
        <label>SLC30A10</label>
    </interactant>
    <organismsDiffer>false</organismsDiffer>
    <experiments>2</experiments>
</comment>
<comment type="interaction">
    <interactant intactId="EBI-13918058">
        <id>O14863</id>
    </interactant>
    <interactant intactId="EBI-8644112">
        <id>Q9BRI3</id>
        <label>SLC30A2</label>
    </interactant>
    <organismsDiffer>false</organismsDiffer>
    <experiments>4</experiments>
</comment>
<comment type="interaction">
    <interactant intactId="EBI-13918058">
        <id>O14863</id>
    </interactant>
    <interactant intactId="EBI-10294651">
        <id>Q99726</id>
        <label>SLC30A3</label>
    </interactant>
    <organismsDiffer>false</organismsDiffer>
    <experiments>8</experiments>
</comment>
<comment type="interaction">
    <interactant intactId="EBI-13918058">
        <id>O14863</id>
    </interactant>
    <interactant intactId="EBI-8644968">
        <id>Q9NV29</id>
        <label>TMEM100</label>
    </interactant>
    <organismsDiffer>false</organismsDiffer>
    <experiments>3</experiments>
</comment>
<comment type="interaction">
    <interactant intactId="EBI-13918058">
        <id>O14863</id>
    </interactant>
    <interactant intactId="EBI-25600012">
        <id>Q8TC26</id>
        <label>TMEM163</label>
    </interactant>
    <organismsDiffer>false</organismsDiffer>
    <experiments>3</experiments>
</comment>
<comment type="interaction">
    <interactant intactId="EBI-13918058">
        <id>O14863</id>
    </interactant>
    <interactant intactId="EBI-2852148">
        <id>Q9H2L4</id>
        <label>TMEM60</label>
    </interactant>
    <organismsDiffer>false</organismsDiffer>
    <experiments>3</experiments>
</comment>
<comment type="interaction">
    <interactant intactId="EBI-13918058">
        <id>O14863</id>
    </interactant>
    <interactant intactId="EBI-359977">
        <id>P01375</id>
        <label>TNF</label>
    </interactant>
    <organismsDiffer>false</organismsDiffer>
    <experiments>3</experiments>
</comment>
<comment type="interaction">
    <interactant intactId="EBI-13918058">
        <id>O14863</id>
    </interactant>
    <interactant intactId="EBI-717441">
        <id>O14798</id>
        <label>TNFRSF10C</label>
    </interactant>
    <organismsDiffer>false</organismsDiffer>
    <experiments>3</experiments>
</comment>
<comment type="interaction">
    <interactant intactId="EBI-13918058">
        <id>O14863</id>
    </interactant>
    <interactant intactId="EBI-751210">
        <id>Q96EC8</id>
        <label>YIPF6</label>
    </interactant>
    <organismsDiffer>false</organismsDiffer>
    <experiments>3</experiments>
</comment>
<comment type="interaction">
    <interactant intactId="EBI-13918058">
        <id>O14863</id>
    </interactant>
    <interactant intactId="EBI-2112551">
        <id>Q99376</id>
        <label>Tfrc</label>
    </interactant>
    <organismsDiffer>true</organismsDiffer>
    <experiments>5</experiments>
</comment>
<comment type="subcellular location">
    <subcellularLocation>
        <location evidence="2">Endosome membrane</location>
        <topology evidence="4">Multi-pass membrane protein</topology>
    </subcellularLocation>
    <subcellularLocation>
        <location evidence="5">Late endosome membrane</location>
        <topology evidence="4">Multi-pass membrane protein</topology>
    </subcellularLocation>
    <subcellularLocation>
        <location evidence="5">Lysosome membrane</location>
        <topology evidence="4">Multi-pass membrane protein</topology>
    </subcellularLocation>
    <text evidence="2">Enriched in vesicles within the basal region of epithelial cells.</text>
</comment>
<comment type="PTM">
    <text evidence="6">Homodimerization through dityrosine bonds is stimulated by oxidative stress.</text>
</comment>
<comment type="similarity">
    <text evidence="9">Belongs to the cation diffusion facilitator (CDF) transporter (TC 2.A.4) family. SLC30A subfamily.</text>
</comment>
<gene>
    <name evidence="11" type="primary">SLC30A4</name>
    <name evidence="8" type="synonym">ZNT4</name>
</gene>
<name>ZNT4_HUMAN</name>
<proteinExistence type="evidence at protein level"/>
<keyword id="KW-0050">Antiport</keyword>
<keyword id="KW-0967">Endosome</keyword>
<keyword id="KW-0406">Ion transport</keyword>
<keyword id="KW-0458">Lysosome</keyword>
<keyword id="KW-0472">Membrane</keyword>
<keyword id="KW-0479">Metal-binding</keyword>
<keyword id="KW-1267">Proteomics identification</keyword>
<keyword id="KW-1185">Reference proteome</keyword>
<keyword id="KW-0812">Transmembrane</keyword>
<keyword id="KW-1133">Transmembrane helix</keyword>
<keyword id="KW-0813">Transport</keyword>
<keyword id="KW-0862">Zinc</keyword>
<keyword id="KW-0864">Zinc transport</keyword>
<protein>
    <recommendedName>
        <fullName evidence="10">Probable proton-coupled zinc antiporter SLC30A4</fullName>
    </recommendedName>
    <alternativeName>
        <fullName evidence="11">Solute carrier family 30 member 4</fullName>
    </alternativeName>
    <alternativeName>
        <fullName evidence="10">Zinc transporter 4</fullName>
        <shortName>ZnT-4</shortName>
    </alternativeName>
</protein>
<organism>
    <name type="scientific">Homo sapiens</name>
    <name type="common">Human</name>
    <dbReference type="NCBI Taxonomy" id="9606"/>
    <lineage>
        <taxon>Eukaryota</taxon>
        <taxon>Metazoa</taxon>
        <taxon>Chordata</taxon>
        <taxon>Craniata</taxon>
        <taxon>Vertebrata</taxon>
        <taxon>Euteleostomi</taxon>
        <taxon>Mammalia</taxon>
        <taxon>Eutheria</taxon>
        <taxon>Euarchontoglires</taxon>
        <taxon>Primates</taxon>
        <taxon>Haplorrhini</taxon>
        <taxon>Catarrhini</taxon>
        <taxon>Hominidae</taxon>
        <taxon>Homo</taxon>
    </lineage>
</organism>